<feature type="chain" id="PRO_0000381782" description="Protein adenylyltransferase Fic">
    <location>
        <begin position="1"/>
        <end position="497"/>
    </location>
</feature>
<feature type="transmembrane region" description="Helical" evidence="4">
    <location>
        <begin position="38"/>
        <end position="58"/>
    </location>
</feature>
<feature type="repeat" description="TPR 1">
    <location>
        <begin position="123"/>
        <end position="156"/>
    </location>
</feature>
<feature type="repeat" description="TPR 2">
    <location>
        <begin position="157"/>
        <end position="191"/>
    </location>
</feature>
<feature type="domain" description="Fido" evidence="5">
    <location>
        <begin position="302"/>
        <end position="437"/>
    </location>
</feature>
<feature type="region of interest" description="Disordered" evidence="6">
    <location>
        <begin position="1"/>
        <end position="30"/>
    </location>
</feature>
<feature type="region of interest" description="Disordered" evidence="6">
    <location>
        <begin position="468"/>
        <end position="497"/>
    </location>
</feature>
<feature type="short sequence motif" description="Inhibitory (S/T)XXXE(G/N) motif">
    <location>
        <begin position="248"/>
        <end position="253"/>
    </location>
</feature>
<feature type="active site" evidence="1">
    <location>
        <position position="380"/>
    </location>
</feature>
<feature type="binding site" evidence="3">
    <location>
        <position position="252"/>
    </location>
    <ligand>
        <name>ATP</name>
        <dbReference type="ChEBI" id="CHEBI:30616"/>
    </ligand>
</feature>
<feature type="binding site" evidence="3">
    <location>
        <begin position="333"/>
        <end position="336"/>
    </location>
    <ligand>
        <name>ATP</name>
        <dbReference type="ChEBI" id="CHEBI:30616"/>
    </ligand>
</feature>
<feature type="binding site" evidence="3">
    <location>
        <begin position="384"/>
        <end position="391"/>
    </location>
    <ligand>
        <name>ATP</name>
        <dbReference type="ChEBI" id="CHEBI:30616"/>
    </ligand>
</feature>
<feature type="binding site" evidence="3">
    <location>
        <begin position="416"/>
        <end position="417"/>
    </location>
    <ligand>
        <name>ATP</name>
        <dbReference type="ChEBI" id="CHEBI:30616"/>
    </ligand>
</feature>
<feature type="binding site" evidence="3">
    <location>
        <position position="424"/>
    </location>
    <ligand>
        <name>ATP</name>
        <dbReference type="ChEBI" id="CHEBI:30616"/>
    </ligand>
</feature>
<feature type="site" description="Important for autoinhibition of adenylyltransferase activity" evidence="3">
    <location>
        <position position="252"/>
    </location>
</feature>
<evidence type="ECO:0000250" key="1">
    <source>
        <dbReference type="UniProtKB" id="A0A061I403"/>
    </source>
</evidence>
<evidence type="ECO:0000250" key="2">
    <source>
        <dbReference type="UniProtKB" id="Q8SWV6"/>
    </source>
</evidence>
<evidence type="ECO:0000250" key="3">
    <source>
        <dbReference type="UniProtKB" id="Q9BVA6"/>
    </source>
</evidence>
<evidence type="ECO:0000255" key="4"/>
<evidence type="ECO:0000255" key="5">
    <source>
        <dbReference type="PROSITE-ProRule" id="PRU00791"/>
    </source>
</evidence>
<evidence type="ECO:0000256" key="6">
    <source>
        <dbReference type="SAM" id="MobiDB-lite"/>
    </source>
</evidence>
<evidence type="ECO:0000305" key="7"/>
<sequence>MGATDQALEAESKTTEPPKTPPVPEQHDRPFLGRQANLCHLLVLLFSGGLAAITLHIFTSSNVGWRLRQLHHLPTAHYLQTRDEFAVYSVDELNAFKEFYDRSISDSVGSSYSEAEETNIKEALGALRLAQDMYLAGKDDKAARLFQHSLALAPRHPTVLLRYGEFLEHSQRNIVLADQYYFQALSISPSNSEALANRQRTADVVQSLDERRLESLDSKRDALSAIHESSAALRRAKKEAYFQHIYHTVGIEGNTMTLAQTRSILETRMAVDGKSIDEHNEILGMDLAMKYINASLVQKMEITIKDILELHRRVLGHVDPIEGGEFRRNQVYVGGHVPPGPGDLALLMQRFERWLNSEHSSSMHPVNYAALAHYKLVHIHPFIDGNGRTSRLLMNTLLMRAGYPPVIIPKQQRSKYYHFLKLANEGDIRPFVRFIADCTEKTLDLYLWATSDLPHQIPMLIQSTSEAGEGVPQLQSSQMGGGASIPEFHESGSGSLP</sequence>
<gene>
    <name type="ORF">GF14521</name>
</gene>
<comment type="function">
    <text evidence="1 2">Protein that can both mediate the addition of adenosine 5'-monophosphate (AMP) to specific residues of target proteins (AMPylation), and the removal of the same modification from target proteins (de-AMPylation), depending on the context (By similarity). The side chain of Glu-252 determines which of the two opposing activities (AMPylase or de-AMPylase) will take place (By similarity). Acts as a key regulator of the unfolded protein response (UPR) by mediating AMPylation or de-AMPylation of Hsc70-3/BiP. In unstressed cells, acts as an adenylyltransferase by mediating AMPylation of Hsc70-3/BiP at 'Thr-518', thereby inactivating it. In response to endoplasmic reticulum stress, acts as a phosphodiesterase by mediating removal of ATP (de-AMPylation) from Hsc70-3/BiP at 'Thr-518', leading to restore HSPA5/BiP activity (By similarity).</text>
</comment>
<comment type="catalytic activity">
    <reaction evidence="3">
        <text>L-tyrosyl-[protein] + ATP = O-(5'-adenylyl)-L-tyrosyl-[protein] + diphosphate</text>
        <dbReference type="Rhea" id="RHEA:54288"/>
        <dbReference type="Rhea" id="RHEA-COMP:10136"/>
        <dbReference type="Rhea" id="RHEA-COMP:13846"/>
        <dbReference type="ChEBI" id="CHEBI:30616"/>
        <dbReference type="ChEBI" id="CHEBI:33019"/>
        <dbReference type="ChEBI" id="CHEBI:46858"/>
        <dbReference type="ChEBI" id="CHEBI:83624"/>
        <dbReference type="EC" id="2.7.7.108"/>
    </reaction>
</comment>
<comment type="catalytic activity">
    <reaction evidence="2">
        <text>L-threonyl-[protein] + ATP = 3-O-(5'-adenylyl)-L-threonyl-[protein] + diphosphate</text>
        <dbReference type="Rhea" id="RHEA:54292"/>
        <dbReference type="Rhea" id="RHEA-COMP:11060"/>
        <dbReference type="Rhea" id="RHEA-COMP:13847"/>
        <dbReference type="ChEBI" id="CHEBI:30013"/>
        <dbReference type="ChEBI" id="CHEBI:30616"/>
        <dbReference type="ChEBI" id="CHEBI:33019"/>
        <dbReference type="ChEBI" id="CHEBI:138113"/>
        <dbReference type="EC" id="2.7.7.108"/>
    </reaction>
</comment>
<comment type="catalytic activity">
    <reaction evidence="2">
        <text>3-O-(5'-adenylyl)-L-threonyl-[protein] + H2O = L-threonyl-[protein] + AMP + H(+)</text>
        <dbReference type="Rhea" id="RHEA:55932"/>
        <dbReference type="Rhea" id="RHEA-COMP:11060"/>
        <dbReference type="Rhea" id="RHEA-COMP:13847"/>
        <dbReference type="ChEBI" id="CHEBI:15377"/>
        <dbReference type="ChEBI" id="CHEBI:15378"/>
        <dbReference type="ChEBI" id="CHEBI:30013"/>
        <dbReference type="ChEBI" id="CHEBI:138113"/>
        <dbReference type="ChEBI" id="CHEBI:456215"/>
    </reaction>
</comment>
<comment type="activity regulation">
    <text evidence="1 3">The side chain of Glu-252 determines which of the two opposing activities (AMPylase or de-AMPylase) will take place. In response to endoplasmic reticulum stress, mediates de-AMPylase activity (By similarity). Adenylyltransferase activity is inhibited by the inhibitory helix present at the N-terminus: Glu-252 binds ATP and competes with ATP-binding at Arg-391, thereby preventing adenylyltransferase activity (By similarity). In unstressed cells, disengagement of Glu-252 promotes adenylyltransferase activity (By similarity). Activation dissociates ATP-binding from Glu-252, allowing ordered binding of the entire ATP moiety with the alpha-phosphate in an orientation that is productive for accepting an incoming target hydroxyl side chain (By similarity).</text>
</comment>
<comment type="subunit">
    <text evidence="2">Homodimer.</text>
</comment>
<comment type="subcellular location">
    <subcellularLocation>
        <location evidence="2">Membrane</location>
        <topology evidence="2">Single-pass membrane protein</topology>
    </subcellularLocation>
</comment>
<comment type="domain">
    <text evidence="3">The fido domain mediates the adenylyltransferase activity.</text>
</comment>
<comment type="similarity">
    <text evidence="7">Belongs to the fic family.</text>
</comment>
<protein>
    <recommendedName>
        <fullName>Protein adenylyltransferase Fic</fullName>
        <ecNumber evidence="2">2.7.7.108</ecNumber>
    </recommendedName>
    <alternativeName>
        <fullName evidence="7">De-AMPylase Fic</fullName>
        <ecNumber evidence="1 2">3.1.4.-</ecNumber>
    </alternativeName>
</protein>
<accession>B3MK83</accession>
<name>FICD_DROAN</name>
<dbReference type="EC" id="2.7.7.108" evidence="2"/>
<dbReference type="EC" id="3.1.4.-" evidence="1 2"/>
<dbReference type="EMBL" id="CH902620">
    <property type="protein sequence ID" value="EDV31501.1"/>
    <property type="molecule type" value="Genomic_DNA"/>
</dbReference>
<dbReference type="SMR" id="B3MK83"/>
<dbReference type="FunCoup" id="B3MK83">
    <property type="interactions" value="263"/>
</dbReference>
<dbReference type="STRING" id="7217.B3MK83"/>
<dbReference type="EnsemblMetazoa" id="FBtr0119221">
    <property type="protein sequence ID" value="FBpp0117713"/>
    <property type="gene ID" value="FBgn0091548"/>
</dbReference>
<dbReference type="EnsemblMetazoa" id="XM_001962244.4">
    <property type="protein sequence ID" value="XP_001962280.1"/>
    <property type="gene ID" value="LOC6497344"/>
</dbReference>
<dbReference type="GeneID" id="6497344"/>
<dbReference type="KEGG" id="dan:6497344"/>
<dbReference type="CTD" id="33897"/>
<dbReference type="eggNOG" id="KOG3824">
    <property type="taxonomic scope" value="Eukaryota"/>
</dbReference>
<dbReference type="HOGENOM" id="CLU_040460_0_0_1"/>
<dbReference type="InParanoid" id="B3MK83"/>
<dbReference type="OMA" id="QLRCQLW"/>
<dbReference type="OrthoDB" id="439046at2759"/>
<dbReference type="PhylomeDB" id="B3MK83"/>
<dbReference type="Proteomes" id="UP000007801">
    <property type="component" value="Unassembled WGS sequence"/>
</dbReference>
<dbReference type="GO" id="GO:0016020">
    <property type="term" value="C:membrane"/>
    <property type="evidence" value="ECO:0007669"/>
    <property type="project" value="UniProtKB-SubCell"/>
</dbReference>
<dbReference type="GO" id="GO:0070733">
    <property type="term" value="F:AMPylase activity"/>
    <property type="evidence" value="ECO:0000250"/>
    <property type="project" value="UniProtKB"/>
</dbReference>
<dbReference type="GO" id="GO:0005524">
    <property type="term" value="F:ATP binding"/>
    <property type="evidence" value="ECO:0007669"/>
    <property type="project" value="UniProtKB-KW"/>
</dbReference>
<dbReference type="GO" id="GO:0016787">
    <property type="term" value="F:hydrolase activity"/>
    <property type="evidence" value="ECO:0007669"/>
    <property type="project" value="UniProtKB-KW"/>
</dbReference>
<dbReference type="GO" id="GO:0018117">
    <property type="term" value="P:protein adenylylation"/>
    <property type="evidence" value="ECO:0000250"/>
    <property type="project" value="UniProtKB"/>
</dbReference>
<dbReference type="FunFam" id="1.10.3290.10:FF:000001">
    <property type="entry name" value="adenosine monophosphate-protein transferase FICD"/>
    <property type="match status" value="1"/>
</dbReference>
<dbReference type="FunFam" id="1.25.40.10:FF:000522">
    <property type="entry name" value="Protein adenylyltransferase Fic"/>
    <property type="match status" value="1"/>
</dbReference>
<dbReference type="Gene3D" id="1.10.3290.10">
    <property type="entry name" value="Fido-like domain"/>
    <property type="match status" value="1"/>
</dbReference>
<dbReference type="Gene3D" id="1.25.40.10">
    <property type="entry name" value="Tetratricopeptide repeat domain"/>
    <property type="match status" value="1"/>
</dbReference>
<dbReference type="InterPro" id="IPR003812">
    <property type="entry name" value="Fido"/>
</dbReference>
<dbReference type="InterPro" id="IPR036597">
    <property type="entry name" value="Fido-like_dom_sf"/>
</dbReference>
<dbReference type="InterPro" id="IPR040198">
    <property type="entry name" value="Fido_containing"/>
</dbReference>
<dbReference type="InterPro" id="IPR011990">
    <property type="entry name" value="TPR-like_helical_dom_sf"/>
</dbReference>
<dbReference type="PANTHER" id="PTHR13504">
    <property type="entry name" value="FIDO DOMAIN-CONTAINING PROTEIN DDB_G0283145"/>
    <property type="match status" value="1"/>
</dbReference>
<dbReference type="PANTHER" id="PTHR13504:SF34">
    <property type="entry name" value="PROTEIN ADENYLYLTRANSFERASE FICD"/>
    <property type="match status" value="1"/>
</dbReference>
<dbReference type="Pfam" id="PF02661">
    <property type="entry name" value="Fic"/>
    <property type="match status" value="1"/>
</dbReference>
<dbReference type="SUPFAM" id="SSF140931">
    <property type="entry name" value="Fic-like"/>
    <property type="match status" value="1"/>
</dbReference>
<dbReference type="SUPFAM" id="SSF48452">
    <property type="entry name" value="TPR-like"/>
    <property type="match status" value="1"/>
</dbReference>
<dbReference type="PROSITE" id="PS51459">
    <property type="entry name" value="FIDO"/>
    <property type="match status" value="1"/>
</dbReference>
<dbReference type="PROSITE" id="PS50293">
    <property type="entry name" value="TPR_REGION"/>
    <property type="match status" value="1"/>
</dbReference>
<proteinExistence type="inferred from homology"/>
<reference key="1">
    <citation type="journal article" date="2007" name="Nature">
        <title>Evolution of genes and genomes on the Drosophila phylogeny.</title>
        <authorList>
            <consortium name="Drosophila 12 genomes consortium"/>
        </authorList>
    </citation>
    <scope>NUCLEOTIDE SEQUENCE [LARGE SCALE GENOMIC DNA]</scope>
    <source>
        <strain>Tucson 14024-0371.13</strain>
    </source>
</reference>
<organism>
    <name type="scientific">Drosophila ananassae</name>
    <name type="common">Fruit fly</name>
    <dbReference type="NCBI Taxonomy" id="7217"/>
    <lineage>
        <taxon>Eukaryota</taxon>
        <taxon>Metazoa</taxon>
        <taxon>Ecdysozoa</taxon>
        <taxon>Arthropoda</taxon>
        <taxon>Hexapoda</taxon>
        <taxon>Insecta</taxon>
        <taxon>Pterygota</taxon>
        <taxon>Neoptera</taxon>
        <taxon>Endopterygota</taxon>
        <taxon>Diptera</taxon>
        <taxon>Brachycera</taxon>
        <taxon>Muscomorpha</taxon>
        <taxon>Ephydroidea</taxon>
        <taxon>Drosophilidae</taxon>
        <taxon>Drosophila</taxon>
        <taxon>Sophophora</taxon>
    </lineage>
</organism>
<keyword id="KW-0067">ATP-binding</keyword>
<keyword id="KW-0378">Hydrolase</keyword>
<keyword id="KW-0472">Membrane</keyword>
<keyword id="KW-0547">Nucleotide-binding</keyword>
<keyword id="KW-0548">Nucleotidyltransferase</keyword>
<keyword id="KW-1185">Reference proteome</keyword>
<keyword id="KW-0677">Repeat</keyword>
<keyword id="KW-0802">TPR repeat</keyword>
<keyword id="KW-0808">Transferase</keyword>
<keyword id="KW-0812">Transmembrane</keyword>
<keyword id="KW-1133">Transmembrane helix</keyword>